<dbReference type="EMBL" id="HE601438">
    <property type="protein sequence ID" value="CAP23839.3"/>
    <property type="molecule type" value="Genomic_DNA"/>
</dbReference>
<dbReference type="SMR" id="A8WTM7"/>
<dbReference type="FunCoup" id="A8WTM7">
    <property type="interactions" value="1964"/>
</dbReference>
<dbReference type="STRING" id="6238.A8WTM7"/>
<dbReference type="EnsemblMetazoa" id="CBG02729.1">
    <property type="protein sequence ID" value="CBG02729.1"/>
    <property type="gene ID" value="WBGene00025730"/>
</dbReference>
<dbReference type="KEGG" id="cbr:CBG_02729"/>
<dbReference type="CTD" id="8572502"/>
<dbReference type="WormBase" id="CBG02729">
    <property type="protein sequence ID" value="CBP00760"/>
    <property type="gene ID" value="WBGene00025730"/>
    <property type="gene designation" value="Cbr-pro-2"/>
</dbReference>
<dbReference type="eggNOG" id="KOG2256">
    <property type="taxonomic scope" value="Eukaryota"/>
</dbReference>
<dbReference type="HOGENOM" id="CLU_399139_0_0_1"/>
<dbReference type="InParanoid" id="A8WTM7"/>
<dbReference type="OMA" id="GCLRYYL"/>
<dbReference type="Proteomes" id="UP000008549">
    <property type="component" value="Unassembled WGS sequence"/>
</dbReference>
<dbReference type="GO" id="GO:0030690">
    <property type="term" value="C:Noc1p-Noc2p complex"/>
    <property type="evidence" value="ECO:0000318"/>
    <property type="project" value="GO_Central"/>
</dbReference>
<dbReference type="GO" id="GO:0030691">
    <property type="term" value="C:Noc2p-Noc3p complex"/>
    <property type="evidence" value="ECO:0000318"/>
    <property type="project" value="GO_Central"/>
</dbReference>
<dbReference type="GO" id="GO:0005730">
    <property type="term" value="C:nucleolus"/>
    <property type="evidence" value="ECO:0000318"/>
    <property type="project" value="GO_Central"/>
</dbReference>
<dbReference type="GO" id="GO:0005654">
    <property type="term" value="C:nucleoplasm"/>
    <property type="evidence" value="ECO:0000318"/>
    <property type="project" value="GO_Central"/>
</dbReference>
<dbReference type="GO" id="GO:0042393">
    <property type="term" value="F:histone binding"/>
    <property type="evidence" value="ECO:0000318"/>
    <property type="project" value="GO_Central"/>
</dbReference>
<dbReference type="GO" id="GO:0003714">
    <property type="term" value="F:transcription corepressor activity"/>
    <property type="evidence" value="ECO:0000318"/>
    <property type="project" value="GO_Central"/>
</dbReference>
<dbReference type="GO" id="GO:0030154">
    <property type="term" value="P:cell differentiation"/>
    <property type="evidence" value="ECO:0007669"/>
    <property type="project" value="UniProtKB-KW"/>
</dbReference>
<dbReference type="GO" id="GO:0007506">
    <property type="term" value="P:gonadal mesoderm development"/>
    <property type="evidence" value="ECO:0007669"/>
    <property type="project" value="UniProtKB-KW"/>
</dbReference>
<dbReference type="GO" id="GO:0000122">
    <property type="term" value="P:negative regulation of transcription by RNA polymerase II"/>
    <property type="evidence" value="ECO:0000318"/>
    <property type="project" value="GO_Central"/>
</dbReference>
<dbReference type="GO" id="GO:0042273">
    <property type="term" value="P:ribosomal large subunit biogenesis"/>
    <property type="evidence" value="ECO:0000318"/>
    <property type="project" value="GO_Central"/>
</dbReference>
<dbReference type="InterPro" id="IPR016024">
    <property type="entry name" value="ARM-type_fold"/>
</dbReference>
<dbReference type="InterPro" id="IPR005343">
    <property type="entry name" value="Noc2"/>
</dbReference>
<dbReference type="PANTHER" id="PTHR12687">
    <property type="entry name" value="NUCLEOLAR COMPLEX 2 AND RAD4-RELATED"/>
    <property type="match status" value="1"/>
</dbReference>
<dbReference type="PANTHER" id="PTHR12687:SF4">
    <property type="entry name" value="NUCLEOLAR COMPLEX PROTEIN 2 HOMOLOG"/>
    <property type="match status" value="1"/>
</dbReference>
<dbReference type="Pfam" id="PF03715">
    <property type="entry name" value="Noc2"/>
    <property type="match status" value="1"/>
</dbReference>
<dbReference type="SUPFAM" id="SSF48371">
    <property type="entry name" value="ARM repeat"/>
    <property type="match status" value="1"/>
</dbReference>
<name>NOC2L_CAEBR</name>
<evidence type="ECO:0000250" key="1"/>
<evidence type="ECO:0000256" key="2">
    <source>
        <dbReference type="SAM" id="MobiDB-lite"/>
    </source>
</evidence>
<evidence type="ECO:0000305" key="3"/>
<keyword id="KW-0217">Developmental protein</keyword>
<keyword id="KW-0221">Differentiation</keyword>
<keyword id="KW-0334">Gonadal differentiation</keyword>
<keyword id="KW-0539">Nucleus</keyword>
<keyword id="KW-1185">Reference proteome</keyword>
<accession>A8WTM7</accession>
<protein>
    <recommendedName>
        <fullName>Nucleolar complex protein 2 homolog</fullName>
        <shortName>Protein NOC2 homolog</shortName>
    </recommendedName>
    <alternativeName>
        <fullName>Proximal proliferation in germline protein 2</fullName>
    </alternativeName>
</protein>
<proteinExistence type="inferred from homology"/>
<reference key="1">
    <citation type="journal article" date="2003" name="PLoS Biol.">
        <title>The genome sequence of Caenorhabditis briggsae: a platform for comparative genomics.</title>
        <authorList>
            <person name="Stein L.D."/>
            <person name="Bao Z."/>
            <person name="Blasiar D."/>
            <person name="Blumenthal T."/>
            <person name="Brent M.R."/>
            <person name="Chen N."/>
            <person name="Chinwalla A."/>
            <person name="Clarke L."/>
            <person name="Clee C."/>
            <person name="Coghlan A."/>
            <person name="Coulson A."/>
            <person name="D'Eustachio P."/>
            <person name="Fitch D.H.A."/>
            <person name="Fulton L.A."/>
            <person name="Fulton R.E."/>
            <person name="Griffiths-Jones S."/>
            <person name="Harris T.W."/>
            <person name="Hillier L.W."/>
            <person name="Kamath R."/>
            <person name="Kuwabara P.E."/>
            <person name="Mardis E.R."/>
            <person name="Marra M.A."/>
            <person name="Miner T.L."/>
            <person name="Minx P."/>
            <person name="Mullikin J.C."/>
            <person name="Plumb R.W."/>
            <person name="Rogers J."/>
            <person name="Schein J.E."/>
            <person name="Sohrmann M."/>
            <person name="Spieth J."/>
            <person name="Stajich J.E."/>
            <person name="Wei C."/>
            <person name="Willey D."/>
            <person name="Wilson R.K."/>
            <person name="Durbin R.M."/>
            <person name="Waterston R.H."/>
        </authorList>
    </citation>
    <scope>NUCLEOTIDE SEQUENCE [LARGE SCALE GENOMIC DNA]</scope>
    <source>
        <strain>AF16</strain>
    </source>
</reference>
<gene>
    <name type="primary">pro-2</name>
    <name type="ORF">CBG02729</name>
</gene>
<sequence length="719" mass="82485">MKLLKKSSSLKKGVTKRAKLQKKPPSKDEASSSDEELAKLDGEGSLDGNESEEDDGTVQVEKGGMKKHKLDLEALKKSDPEFFKFLQQEDADLLNMEEDEDDDEEGEDNEDEEDEEEEEESDEDDDEEDDDKTKIKKIRKPKVKSDSSGRLIVDSNVYSYLQQVLVLDDETTTPINPSDVRMAIDVFVACVARVGADIEAPKYVINEQSIFEAVVRMCFQAMPDVLKRLLKARPDGEKVLFSKTMIKKYQTYVRTYLHAMIVFLNEVQTTEVIIATLKAITRLVDLYAHFSRMSKLLIKAIVKIWSRKTLECRLPAFVCMNLLVKNYPQHFVPLYKTAYVAFVANSKVVTNETWPLLQFMHRTFAEITMINPEQAYKYAFVYIRQTAVHLRNAMIAKGRKDLIFSIYNWQMMQCMYMWVRVIAKAHSVNGAEQIGELVYPLIQVIVGIFKLCNAPTFLPLRLHCCQMLIQLQASCTNYIPIMQLSCDCLEELARELKSKPKPAKGAVKLPDIECTLKCSTQYSDLPQWRKTISEHVFRTMMQSAHLLASQAAFPDVALPINHRIATILDTMKNADQAHLFRGFQTKLKEHSRFVLDVLARKHVDLNDEMQVRAVRFDLNNPDSPIKSFYRQWEKVWKMKEKSALENSKKDDKKKKKEEEAAKKRKATETLEDDDDEDAKPTIPKAKRKRIKIGAAAKRADATVPDQFADMSLANWSDED</sequence>
<comment type="function">
    <text evidence="1">Required for normal somatic gonad development and for regulation of germline development and proliferation.</text>
</comment>
<comment type="subcellular location">
    <subcellularLocation>
        <location evidence="1">Nucleus</location>
    </subcellularLocation>
</comment>
<comment type="similarity">
    <text evidence="3">Belongs to the NOC2 family.</text>
</comment>
<organism>
    <name type="scientific">Caenorhabditis briggsae</name>
    <dbReference type="NCBI Taxonomy" id="6238"/>
    <lineage>
        <taxon>Eukaryota</taxon>
        <taxon>Metazoa</taxon>
        <taxon>Ecdysozoa</taxon>
        <taxon>Nematoda</taxon>
        <taxon>Chromadorea</taxon>
        <taxon>Rhabditida</taxon>
        <taxon>Rhabditina</taxon>
        <taxon>Rhabditomorpha</taxon>
        <taxon>Rhabditoidea</taxon>
        <taxon>Rhabditidae</taxon>
        <taxon>Peloderinae</taxon>
        <taxon>Caenorhabditis</taxon>
    </lineage>
</organism>
<feature type="chain" id="PRO_0000315875" description="Nucleolar complex protein 2 homolog">
    <location>
        <begin position="1"/>
        <end position="719"/>
    </location>
</feature>
<feature type="region of interest" description="Disordered" evidence="2">
    <location>
        <begin position="1"/>
        <end position="67"/>
    </location>
</feature>
<feature type="region of interest" description="Disordered" evidence="2">
    <location>
        <begin position="86"/>
        <end position="136"/>
    </location>
</feature>
<feature type="region of interest" description="Disordered" evidence="2">
    <location>
        <begin position="643"/>
        <end position="719"/>
    </location>
</feature>
<feature type="compositionally biased region" description="Basic residues" evidence="2">
    <location>
        <begin position="1"/>
        <end position="24"/>
    </location>
</feature>
<feature type="compositionally biased region" description="Basic and acidic residues" evidence="2">
    <location>
        <begin position="25"/>
        <end position="42"/>
    </location>
</feature>
<feature type="compositionally biased region" description="Acidic residues" evidence="2">
    <location>
        <begin position="89"/>
        <end position="130"/>
    </location>
</feature>
<feature type="compositionally biased region" description="Basic and acidic residues" evidence="2">
    <location>
        <begin position="643"/>
        <end position="661"/>
    </location>
</feature>